<reference key="1">
    <citation type="journal article" date="1998" name="Biochem. J.">
        <title>Cloning and sequencing of four new mammalian monocarboxylate transporter (MCT) homologues confirms the existence of a transporter family with an ancient past.</title>
        <authorList>
            <person name="Price N.T."/>
            <person name="Jackson V.N."/>
            <person name="Halestrap A.P."/>
        </authorList>
    </citation>
    <scope>NUCLEOTIDE SEQUENCE [MRNA]</scope>
    <scope>TISSUE SPECIFICITY</scope>
    <source>
        <tissue>Blood</tissue>
    </source>
</reference>
<reference key="2">
    <citation type="journal article" date="2004" name="Nat. Genet.">
        <title>Complete sequencing and characterization of 21,243 full-length human cDNAs.</title>
        <authorList>
            <person name="Ota T."/>
            <person name="Suzuki Y."/>
            <person name="Nishikawa T."/>
            <person name="Otsuki T."/>
            <person name="Sugiyama T."/>
            <person name="Irie R."/>
            <person name="Wakamatsu A."/>
            <person name="Hayashi K."/>
            <person name="Sato H."/>
            <person name="Nagai K."/>
            <person name="Kimura K."/>
            <person name="Makita H."/>
            <person name="Sekine M."/>
            <person name="Obayashi M."/>
            <person name="Nishi T."/>
            <person name="Shibahara T."/>
            <person name="Tanaka T."/>
            <person name="Ishii S."/>
            <person name="Yamamoto J."/>
            <person name="Saito K."/>
            <person name="Kawai Y."/>
            <person name="Isono Y."/>
            <person name="Nakamura Y."/>
            <person name="Nagahari K."/>
            <person name="Murakami K."/>
            <person name="Yasuda T."/>
            <person name="Iwayanagi T."/>
            <person name="Wagatsuma M."/>
            <person name="Shiratori A."/>
            <person name="Sudo H."/>
            <person name="Hosoiri T."/>
            <person name="Kaku Y."/>
            <person name="Kodaira H."/>
            <person name="Kondo H."/>
            <person name="Sugawara M."/>
            <person name="Takahashi M."/>
            <person name="Kanda K."/>
            <person name="Yokoi T."/>
            <person name="Furuya T."/>
            <person name="Kikkawa E."/>
            <person name="Omura Y."/>
            <person name="Abe K."/>
            <person name="Kamihara K."/>
            <person name="Katsuta N."/>
            <person name="Sato K."/>
            <person name="Tanikawa M."/>
            <person name="Yamazaki M."/>
            <person name="Ninomiya K."/>
            <person name="Ishibashi T."/>
            <person name="Yamashita H."/>
            <person name="Murakawa K."/>
            <person name="Fujimori K."/>
            <person name="Tanai H."/>
            <person name="Kimata M."/>
            <person name="Watanabe M."/>
            <person name="Hiraoka S."/>
            <person name="Chiba Y."/>
            <person name="Ishida S."/>
            <person name="Ono Y."/>
            <person name="Takiguchi S."/>
            <person name="Watanabe S."/>
            <person name="Yosida M."/>
            <person name="Hotuta T."/>
            <person name="Kusano J."/>
            <person name="Kanehori K."/>
            <person name="Takahashi-Fujii A."/>
            <person name="Hara H."/>
            <person name="Tanase T.-O."/>
            <person name="Nomura Y."/>
            <person name="Togiya S."/>
            <person name="Komai F."/>
            <person name="Hara R."/>
            <person name="Takeuchi K."/>
            <person name="Arita M."/>
            <person name="Imose N."/>
            <person name="Musashino K."/>
            <person name="Yuuki H."/>
            <person name="Oshima A."/>
            <person name="Sasaki N."/>
            <person name="Aotsuka S."/>
            <person name="Yoshikawa Y."/>
            <person name="Matsunawa H."/>
            <person name="Ichihara T."/>
            <person name="Shiohata N."/>
            <person name="Sano S."/>
            <person name="Moriya S."/>
            <person name="Momiyama H."/>
            <person name="Satoh N."/>
            <person name="Takami S."/>
            <person name="Terashima Y."/>
            <person name="Suzuki O."/>
            <person name="Nakagawa S."/>
            <person name="Senoh A."/>
            <person name="Mizoguchi H."/>
            <person name="Goto Y."/>
            <person name="Shimizu F."/>
            <person name="Wakebe H."/>
            <person name="Hishigaki H."/>
            <person name="Watanabe T."/>
            <person name="Sugiyama A."/>
            <person name="Takemoto M."/>
            <person name="Kawakami B."/>
            <person name="Yamazaki M."/>
            <person name="Watanabe K."/>
            <person name="Kumagai A."/>
            <person name="Itakura S."/>
            <person name="Fukuzumi Y."/>
            <person name="Fujimori Y."/>
            <person name="Komiyama M."/>
            <person name="Tashiro H."/>
            <person name="Tanigami A."/>
            <person name="Fujiwara T."/>
            <person name="Ono T."/>
            <person name="Yamada K."/>
            <person name="Fujii Y."/>
            <person name="Ozaki K."/>
            <person name="Hirao M."/>
            <person name="Ohmori Y."/>
            <person name="Kawabata A."/>
            <person name="Hikiji T."/>
            <person name="Kobatake N."/>
            <person name="Inagaki H."/>
            <person name="Ikema Y."/>
            <person name="Okamoto S."/>
            <person name="Okitani R."/>
            <person name="Kawakami T."/>
            <person name="Noguchi S."/>
            <person name="Itoh T."/>
            <person name="Shigeta K."/>
            <person name="Senba T."/>
            <person name="Matsumura K."/>
            <person name="Nakajima Y."/>
            <person name="Mizuno T."/>
            <person name="Morinaga M."/>
            <person name="Sasaki M."/>
            <person name="Togashi T."/>
            <person name="Oyama M."/>
            <person name="Hata H."/>
            <person name="Watanabe M."/>
            <person name="Komatsu T."/>
            <person name="Mizushima-Sugano J."/>
            <person name="Satoh T."/>
            <person name="Shirai Y."/>
            <person name="Takahashi Y."/>
            <person name="Nakagawa K."/>
            <person name="Okumura K."/>
            <person name="Nagase T."/>
            <person name="Nomura N."/>
            <person name="Kikuchi H."/>
            <person name="Masuho Y."/>
            <person name="Yamashita R."/>
            <person name="Nakai K."/>
            <person name="Yada T."/>
            <person name="Nakamura Y."/>
            <person name="Ohara O."/>
            <person name="Isogai T."/>
            <person name="Sugano S."/>
        </authorList>
    </citation>
    <scope>NUCLEOTIDE SEQUENCE [LARGE SCALE MRNA]</scope>
    <source>
        <tissue>Hippocampus</tissue>
    </source>
</reference>
<reference key="3">
    <citation type="journal article" date="2004" name="Genome Res.">
        <title>The status, quality, and expansion of the NIH full-length cDNA project: the Mammalian Gene Collection (MGC).</title>
        <authorList>
            <consortium name="The MGC Project Team"/>
        </authorList>
    </citation>
    <scope>NUCLEOTIDE SEQUENCE [LARGE SCALE MRNA]</scope>
    <source>
        <tissue>Cerebellum</tissue>
    </source>
</reference>
<reference key="4">
    <citation type="submission" date="2009-10" db="UniProtKB">
        <authorList>
            <person name="Bienvenut W.V."/>
            <person name="Lao L."/>
            <person name="Ryan K.L."/>
        </authorList>
    </citation>
    <scope>PROTEIN SEQUENCE OF 2-14 AND 429-441</scope>
    <scope>CLEAVAGE OF INITIATOR METHIONINE</scope>
    <scope>IDENTIFICATION BY MASS SPECTROMETRY</scope>
    <source>
        <tissue>Cervix carcinoma</tissue>
    </source>
</reference>
<reference key="5">
    <citation type="journal article" date="2000" name="EMBO J.">
        <title>CD147 is tightly associated with lactate transporters MCT1 and MCT4 and facilitates their cell surface expression.</title>
        <authorList>
            <person name="Kirk P."/>
            <person name="Wilson M.C."/>
            <person name="Heddle C."/>
            <person name="Brown M.H."/>
            <person name="Barclay A.N."/>
            <person name="Halestrap A.P."/>
        </authorList>
    </citation>
    <scope>INTERACTION WITH BSG</scope>
    <scope>SUBCELLULAR LOCATION</scope>
</reference>
<reference key="6">
    <citation type="journal article" date="2000" name="J. Physiol. (Lond.)">
        <title>Characterisation of human monocarboxylate transporter 4 substantiates its role in lactic acid efflux from skeletal muscle.</title>
        <authorList>
            <person name="Manning Fox J.E."/>
            <person name="Meredith D."/>
            <person name="Halestrap A.P."/>
        </authorList>
    </citation>
    <scope>FUNCTION</scope>
    <scope>TRANSPORTER ACTIVITY</scope>
    <scope>BIOPHYSICOCHEMICAL PROPERTIES</scope>
    <scope>SUBCELLULAR LOCATION</scope>
</reference>
<reference key="7">
    <citation type="journal article" date="2004" name="J. Histochem. Cytochem.">
        <title>Presence and localization of three lactic acid transporters (MCT1, -2, and -4) in separated human granulocytes, lymphocytes, and monocytes.</title>
        <authorList>
            <person name="Merezhinskaya N."/>
            <person name="Ogunwuyi S.A."/>
            <person name="Mullick F.G."/>
            <person name="Fishbein W.N."/>
        </authorList>
    </citation>
    <scope>SUBCELLULAR LOCATION</scope>
</reference>
<reference key="8">
    <citation type="journal article" date="2006" name="Cell">
        <title>Global, in vivo, and site-specific phosphorylation dynamics in signaling networks.</title>
        <authorList>
            <person name="Olsen J.V."/>
            <person name="Blagoev B."/>
            <person name="Gnad F."/>
            <person name="Macek B."/>
            <person name="Kumar C."/>
            <person name="Mortensen P."/>
            <person name="Mann M."/>
        </authorList>
    </citation>
    <scope>PHOSPHORYLATION [LARGE SCALE ANALYSIS] AT THR-460</scope>
    <scope>IDENTIFICATION BY MASS SPECTROMETRY [LARGE SCALE ANALYSIS]</scope>
    <source>
        <tissue>Cervix carcinoma</tissue>
    </source>
</reference>
<reference key="9">
    <citation type="journal article" date="2006" name="J. Biol. Chem.">
        <title>The plasma membrane lactate transporter MCT4, but not MCT1, is up-regulated by hypoxia through a HIF-1alpha-dependent mechanism.</title>
        <authorList>
            <person name="Ullah M.S."/>
            <person name="Davies A.J."/>
            <person name="Halestrap A.P."/>
        </authorList>
    </citation>
    <scope>INDUCTION</scope>
</reference>
<reference key="10">
    <citation type="journal article" date="2008" name="Mol. Cell">
        <title>Kinase-selective enrichment enables quantitative phosphoproteomics of the kinome across the cell cycle.</title>
        <authorList>
            <person name="Daub H."/>
            <person name="Olsen J.V."/>
            <person name="Bairlein M."/>
            <person name="Gnad F."/>
            <person name="Oppermann F.S."/>
            <person name="Korner R."/>
            <person name="Greff Z."/>
            <person name="Keri G."/>
            <person name="Stemmann O."/>
            <person name="Mann M."/>
        </authorList>
    </citation>
    <scope>PHOSPHORYLATION [LARGE SCALE ANALYSIS] AT THR-460</scope>
    <scope>IDENTIFICATION BY MASS SPECTROMETRY [LARGE SCALE ANALYSIS]</scope>
    <source>
        <tissue>Cervix carcinoma</tissue>
    </source>
</reference>
<reference key="11">
    <citation type="journal article" date="2008" name="Proc. Natl. Acad. Sci. U.S.A.">
        <title>A quantitative atlas of mitotic phosphorylation.</title>
        <authorList>
            <person name="Dephoure N."/>
            <person name="Zhou C."/>
            <person name="Villen J."/>
            <person name="Beausoleil S.A."/>
            <person name="Bakalarski C.E."/>
            <person name="Elledge S.J."/>
            <person name="Gygi S.P."/>
        </authorList>
    </citation>
    <scope>PHOSPHORYLATION [LARGE SCALE ANALYSIS] AT THR-460 AND SER-464</scope>
    <scope>IDENTIFICATION BY MASS SPECTROMETRY [LARGE SCALE ANALYSIS]</scope>
    <source>
        <tissue>Cervix carcinoma</tissue>
    </source>
</reference>
<reference key="12">
    <citation type="journal article" date="2010" name="Sci. Signal.">
        <title>Quantitative phosphoproteomics reveals widespread full phosphorylation site occupancy during mitosis.</title>
        <authorList>
            <person name="Olsen J.V."/>
            <person name="Vermeulen M."/>
            <person name="Santamaria A."/>
            <person name="Kumar C."/>
            <person name="Miller M.L."/>
            <person name="Jensen L.J."/>
            <person name="Gnad F."/>
            <person name="Cox J."/>
            <person name="Jensen T.S."/>
            <person name="Nigg E.A."/>
            <person name="Brunak S."/>
            <person name="Mann M."/>
        </authorList>
    </citation>
    <scope>PHOSPHORYLATION [LARGE SCALE ANALYSIS] AT THR-460 AND SER-464</scope>
    <scope>IDENTIFICATION BY MASS SPECTROMETRY [LARGE SCALE ANALYSIS]</scope>
    <source>
        <tissue>Cervix carcinoma</tissue>
    </source>
</reference>
<reference key="13">
    <citation type="journal article" date="2011" name="BMC Syst. Biol.">
        <title>Initial characterization of the human central proteome.</title>
        <authorList>
            <person name="Burkard T.R."/>
            <person name="Planyavsky M."/>
            <person name="Kaupe I."/>
            <person name="Breitwieser F.P."/>
            <person name="Buerckstuemmer T."/>
            <person name="Bennett K.L."/>
            <person name="Superti-Furga G."/>
            <person name="Colinge J."/>
        </authorList>
    </citation>
    <scope>IDENTIFICATION BY MASS SPECTROMETRY [LARGE SCALE ANALYSIS]</scope>
</reference>
<reference key="14">
    <citation type="journal article" date="2011" name="Traffic">
        <title>Basolateral sorting signals regulating tissue-specific polarity of heteromeric monocarboxylate transporters in epithelia.</title>
        <authorList>
            <person name="Castorino J.J."/>
            <person name="Deborde S."/>
            <person name="Deora A."/>
            <person name="Schreiner R."/>
            <person name="Gallagher-Colombo S.M."/>
            <person name="Rodriguez-Boulan E."/>
            <person name="Philp N.J."/>
        </authorList>
    </citation>
    <scope>SUBCELLULAR LOCATION</scope>
    <scope>MUTAGENESIS OF GLU-425; GLU-426; GLU-427; PRO-432 AND PRO-433</scope>
</reference>
<reference key="15">
    <citation type="journal article" date="2013" name="J. Proteome Res.">
        <title>Toward a comprehensive characterization of a human cancer cell phosphoproteome.</title>
        <authorList>
            <person name="Zhou H."/>
            <person name="Di Palma S."/>
            <person name="Preisinger C."/>
            <person name="Peng M."/>
            <person name="Polat A.N."/>
            <person name="Heck A.J."/>
            <person name="Mohammed S."/>
        </authorList>
    </citation>
    <scope>PHOSPHORYLATION [LARGE SCALE ANALYSIS] AT SER-436</scope>
    <scope>IDENTIFICATION BY MASS SPECTROMETRY [LARGE SCALE ANALYSIS]</scope>
    <source>
        <tissue>Cervix carcinoma</tissue>
    </source>
</reference>
<reference key="16">
    <citation type="journal article" date="2013" name="PLoS ONE">
        <title>Crucial residue involved in L-lactate recognition by human monocarboxylate transporter 4 (hMCT4).</title>
        <authorList>
            <person name="Sasaki S."/>
            <person name="Kobayashi M."/>
            <person name="Futagi Y."/>
            <person name="Ogura J."/>
            <person name="Yamaguchi H."/>
            <person name="Takahashi N."/>
            <person name="Iseki K."/>
        </authorList>
    </citation>
    <scope>FUNCTION</scope>
    <scope>TRANSPORTER ACTIVITY</scope>
    <scope>BIOPHYSICOCHEMICAL PROPERTIES</scope>
    <scope>SUBCELLULAR LOCATION</scope>
    <scope>MUTAGENESIS OF ARG-198 AND ARG-278</scope>
</reference>
<reference key="17">
    <citation type="journal article" date="2015" name="Proteomics">
        <title>N-terminome analysis of the human mitochondrial proteome.</title>
        <authorList>
            <person name="Vaca Jacome A.S."/>
            <person name="Rabilloud T."/>
            <person name="Schaeffer-Reiss C."/>
            <person name="Rompais M."/>
            <person name="Ayoub D."/>
            <person name="Lane L."/>
            <person name="Bairoch A."/>
            <person name="Van Dorsselaer A."/>
            <person name="Carapito C."/>
        </authorList>
    </citation>
    <scope>CLEAVAGE OF INITIATOR METHIONINE [LARGE SCALE ANALYSIS]</scope>
    <scope>IDENTIFICATION BY MASS SPECTROMETRY [LARGE SCALE ANALYSIS]</scope>
</reference>
<reference key="18">
    <citation type="journal article" date="2019" name="J. Biol. Chem.">
        <title>Monocarboxylate transporter 4 (MCT4) is a high affinity transporter capable of exporting lactate in high-lactate microenvironments.</title>
        <authorList>
            <person name="Contreras-Baeza Y."/>
            <person name="Sandoval P.Y."/>
            <person name="Alarcon R."/>
            <person name="Galaz A."/>
            <person name="Cortes-Molina F."/>
            <person name="Alegria K."/>
            <person name="Baeza-Lehnert F."/>
            <person name="Arce-Molina R."/>
            <person name="Guequen A."/>
            <person name="Flores C.A."/>
            <person name="San Martin A."/>
            <person name="Barros L.F."/>
        </authorList>
    </citation>
    <scope>TRANSPORTER ACTIVITY</scope>
    <scope>FUNCTION</scope>
    <scope>BIOPHYSICOCHEMICAL PROPERTIES</scope>
</reference>
<keyword id="KW-1003">Cell membrane</keyword>
<keyword id="KW-0903">Direct protein sequencing</keyword>
<keyword id="KW-0472">Membrane</keyword>
<keyword id="KW-0597">Phosphoprotein</keyword>
<keyword id="KW-1267">Proteomics identification</keyword>
<keyword id="KW-1185">Reference proteome</keyword>
<keyword id="KW-0769">Symport</keyword>
<keyword id="KW-0812">Transmembrane</keyword>
<keyword id="KW-1133">Transmembrane helix</keyword>
<keyword id="KW-0813">Transport</keyword>
<sequence length="465" mass="49469">MGGAVVDEGPTGVKAPDGGWGWAVLFGCFVITGFSYAFPKAVSVFFKELIQEFGIGYSDTAWISSILLAMLYGTGPLCSVCVNRFGCRPVMLVGGLFASLGMVAASFCRSIIQVYLTTGVITGLGLALNFQPSLIMLNRYFSKRRPMANGLAAAGSPVFLCALSPLGQLLQDRYGWRGGFLILGGLLLNCCVCAALMRPLVVTAQPGSGPPRPSRRLLDLSVFRDRGFVLYAVAASVMVLGLFVPPVFVVSYAKDLGVPDTKAAFLLTILGFIDIFARPAAGFVAGLGKVRPYSVYLFSFSMFFNGLADLAGSTAGDYGGLVVFCIFFGISYGMVGALQFEVLMAIVGTHKFSSAIGLVLLMEAVAVLVGPPSGGKLLDATHVYMYVFILAGAEVLTSSLILLLGNFFCIRKKPKEPQPEVAAAEEEKLHKPPADSGVDLREVEHFLKAEPEKNGEVVHTPETSV</sequence>
<feature type="initiator methionine" description="Removed" evidence="12 21">
    <location>
        <position position="1"/>
    </location>
</feature>
<feature type="chain" id="PRO_0000211394" description="Monocarboxylate transporter 4">
    <location>
        <begin position="2"/>
        <end position="465"/>
    </location>
</feature>
<feature type="topological domain" description="Cytoplasmic" evidence="2">
    <location>
        <begin position="2"/>
        <end position="17"/>
    </location>
</feature>
<feature type="transmembrane region" description="Helical" evidence="2">
    <location>
        <begin position="18"/>
        <end position="38"/>
    </location>
</feature>
<feature type="topological domain" description="Extracellular" evidence="2">
    <location>
        <begin position="39"/>
        <end position="61"/>
    </location>
</feature>
<feature type="transmembrane region" description="Helical" evidence="2">
    <location>
        <begin position="62"/>
        <end position="82"/>
    </location>
</feature>
<feature type="topological domain" description="Cytoplasmic" evidence="2">
    <location>
        <begin position="83"/>
        <end position="84"/>
    </location>
</feature>
<feature type="transmembrane region" description="Helical" evidence="2">
    <location>
        <begin position="85"/>
        <end position="105"/>
    </location>
</feature>
<feature type="topological domain" description="Extracellular" evidence="2">
    <location>
        <begin position="106"/>
        <end position="109"/>
    </location>
</feature>
<feature type="transmembrane region" description="Helical" evidence="2">
    <location>
        <begin position="110"/>
        <end position="130"/>
    </location>
</feature>
<feature type="topological domain" description="Cytoplasmic" evidence="2">
    <location>
        <begin position="131"/>
        <end position="149"/>
    </location>
</feature>
<feature type="transmembrane region" description="Helical" evidence="2">
    <location>
        <begin position="150"/>
        <end position="170"/>
    </location>
</feature>
<feature type="topological domain" description="Extracellular" evidence="2">
    <location>
        <begin position="171"/>
        <end position="179"/>
    </location>
</feature>
<feature type="transmembrane region" description="Helical" evidence="2">
    <location>
        <begin position="180"/>
        <end position="200"/>
    </location>
</feature>
<feature type="topological domain" description="Cytoplasmic" evidence="2">
    <location>
        <begin position="201"/>
        <end position="227"/>
    </location>
</feature>
<feature type="transmembrane region" description="Helical" evidence="2">
    <location>
        <begin position="228"/>
        <end position="248"/>
    </location>
</feature>
<feature type="topological domain" description="Extracellular" evidence="2">
    <location>
        <begin position="249"/>
        <end position="264"/>
    </location>
</feature>
<feature type="transmembrane region" description="Helical" evidence="2">
    <location>
        <begin position="265"/>
        <end position="285"/>
    </location>
</feature>
<feature type="topological domain" description="Cytoplasmic" evidence="2">
    <location>
        <begin position="286"/>
        <end position="294"/>
    </location>
</feature>
<feature type="transmembrane region" description="Helical" evidence="2">
    <location>
        <begin position="295"/>
        <end position="315"/>
    </location>
</feature>
<feature type="topological domain" description="Extracellular" evidence="2">
    <location>
        <begin position="316"/>
        <end position="317"/>
    </location>
</feature>
<feature type="transmembrane region" description="Helical" evidence="2">
    <location>
        <begin position="318"/>
        <end position="338"/>
    </location>
</feature>
<feature type="topological domain" description="Cytoplasmic" evidence="2">
    <location>
        <begin position="339"/>
        <end position="351"/>
    </location>
</feature>
<feature type="transmembrane region" description="Helical" evidence="2">
    <location>
        <begin position="352"/>
        <end position="372"/>
    </location>
</feature>
<feature type="topological domain" description="Extracellular" evidence="2">
    <location>
        <begin position="373"/>
        <end position="384"/>
    </location>
</feature>
<feature type="transmembrane region" description="Helical" evidence="2">
    <location>
        <begin position="385"/>
        <end position="405"/>
    </location>
</feature>
<feature type="topological domain" description="Cytoplasmic" evidence="2">
    <location>
        <begin position="406"/>
        <end position="465"/>
    </location>
</feature>
<feature type="region of interest" description="Disordered" evidence="3">
    <location>
        <begin position="419"/>
        <end position="438"/>
    </location>
</feature>
<feature type="region of interest" description="Basolateral sorting signal" evidence="8">
    <location>
        <begin position="423"/>
        <end position="441"/>
    </location>
</feature>
<feature type="region of interest" description="Basolateral sorting signal" evidence="8">
    <location>
        <begin position="441"/>
        <end position="465"/>
    </location>
</feature>
<feature type="compositionally biased region" description="Basic and acidic residues" evidence="3">
    <location>
        <begin position="425"/>
        <end position="438"/>
    </location>
</feature>
<feature type="modified residue" description="Phosphoserine" evidence="20">
    <location>
        <position position="436"/>
    </location>
</feature>
<feature type="modified residue" description="Phosphothreonine" evidence="16 17 18 19">
    <location>
        <position position="460"/>
    </location>
</feature>
<feature type="modified residue" description="Phosphoserine" evidence="17 19">
    <location>
        <position position="464"/>
    </location>
</feature>
<feature type="mutagenesis site" description="Does not affect lactate transmembrane transporter activity." evidence="9">
    <original>R</original>
    <variation>Q</variation>
    <location>
        <position position="198"/>
    </location>
</feature>
<feature type="mutagenesis site" description="Abolishes lactate transmembrane transporter activity. Does not affect cell membrane localization." evidence="9">
    <original>R</original>
    <variation>Q</variation>
    <variation>K</variation>
    <location>
        <position position="278"/>
    </location>
</feature>
<feature type="mutagenesis site" description="Affects subcellular localization leading to apical localization. Affects subcellular localization leading to apical localization; when associated with A-426 and A-427." evidence="8">
    <original>E</original>
    <variation>A</variation>
    <location>
        <position position="425"/>
    </location>
</feature>
<feature type="mutagenesis site" description="Leads to a nonpolar expression pattern. Affects subcellular localization leading to apical localization; when associated with A-425 and A-427." evidence="8">
    <original>E</original>
    <variation>A</variation>
    <location>
        <position position="426"/>
    </location>
</feature>
<feature type="mutagenesis site" description="Affects subcellular localization leading to apical localization. Affects subcellular localization leading to apical localization; when associated with A-425 and A-426." evidence="8">
    <original>E</original>
    <variation>A</variation>
    <location>
        <position position="427"/>
    </location>
</feature>
<feature type="mutagenesis site" description="Does not affect basolateral plasma membrane localization. Intracellular accumulation. Affects subcellular localization leading to apical localization; when associated with A-433." evidence="8">
    <original>P</original>
    <variation>A</variation>
    <location>
        <position position="432"/>
    </location>
</feature>
<feature type="mutagenesis site" description="Does not affect basolateral plasma membrane localization. Intracellular accumulation. Affects subcellular localization leading to apical localization; when associated with A-432." evidence="8">
    <original>P</original>
    <variation>A</variation>
    <location>
        <position position="433"/>
    </location>
</feature>
<dbReference type="EMBL" id="U81800">
    <property type="protein sequence ID" value="AAC52015.1"/>
    <property type="molecule type" value="mRNA"/>
</dbReference>
<dbReference type="EMBL" id="AK127319">
    <property type="protein sequence ID" value="BAG54480.1"/>
    <property type="molecule type" value="mRNA"/>
</dbReference>
<dbReference type="EMBL" id="BC112267">
    <property type="protein sequence ID" value="AAI12268.1"/>
    <property type="molecule type" value="mRNA"/>
</dbReference>
<dbReference type="EMBL" id="BC112269">
    <property type="protein sequence ID" value="AAI12270.1"/>
    <property type="molecule type" value="mRNA"/>
</dbReference>
<dbReference type="CCDS" id="CCDS11804.1"/>
<dbReference type="RefSeq" id="NP_001035887.1">
    <property type="nucleotide sequence ID" value="NM_001042422.3"/>
</dbReference>
<dbReference type="RefSeq" id="NP_001035888.1">
    <property type="nucleotide sequence ID" value="NM_001042423.3"/>
</dbReference>
<dbReference type="RefSeq" id="NP_001193879.1">
    <property type="nucleotide sequence ID" value="NM_001206950.2"/>
</dbReference>
<dbReference type="RefSeq" id="NP_001193880.1">
    <property type="nucleotide sequence ID" value="NM_001206951.2"/>
</dbReference>
<dbReference type="RefSeq" id="NP_001193881.1">
    <property type="nucleotide sequence ID" value="NM_001206952.2"/>
</dbReference>
<dbReference type="RefSeq" id="NP_004198.1">
    <property type="nucleotide sequence ID" value="NM_004207.4"/>
</dbReference>
<dbReference type="RefSeq" id="XP_011521909.1">
    <property type="nucleotide sequence ID" value="XM_011523607.1"/>
</dbReference>
<dbReference type="RefSeq" id="XP_024306791.1">
    <property type="nucleotide sequence ID" value="XM_024451023.2"/>
</dbReference>
<dbReference type="RefSeq" id="XP_047292992.1">
    <property type="nucleotide sequence ID" value="XM_047437036.1"/>
</dbReference>
<dbReference type="RefSeq" id="XP_047292993.1">
    <property type="nucleotide sequence ID" value="XM_047437037.1"/>
</dbReference>
<dbReference type="SMR" id="O15427"/>
<dbReference type="BioGRID" id="114571">
    <property type="interactions" value="73"/>
</dbReference>
<dbReference type="FunCoup" id="O15427">
    <property type="interactions" value="150"/>
</dbReference>
<dbReference type="IntAct" id="O15427">
    <property type="interactions" value="39"/>
</dbReference>
<dbReference type="MINT" id="O15427"/>
<dbReference type="STRING" id="9606.ENSP00000463978"/>
<dbReference type="BindingDB" id="O15427"/>
<dbReference type="ChEMBL" id="CHEMBL2073663"/>
<dbReference type="DrugBank" id="DB01762">
    <property type="generic name" value="Acetoacetic acid"/>
</dbReference>
<dbReference type="DrugBank" id="DB04074">
    <property type="generic name" value="alpha-Ketoisovalerate"/>
</dbReference>
<dbReference type="DrugBank" id="DB03066">
    <property type="generic name" value="D-Lactic acid"/>
</dbReference>
<dbReference type="DrugBank" id="DB07767">
    <property type="generic name" value="Ferulic acid"/>
</dbReference>
<dbReference type="DrugBank" id="DB01942">
    <property type="generic name" value="Formic acid"/>
</dbReference>
<dbReference type="DrugBank" id="DB01440">
    <property type="generic name" value="gamma-Hydroxybutyric acid"/>
</dbReference>
<dbReference type="DrugBank" id="DB04343">
    <property type="generic name" value="Glyoxylic acid"/>
</dbReference>
<dbReference type="DrugBank" id="DB04398">
    <property type="generic name" value="Lactic acid"/>
</dbReference>
<dbReference type="DrugBank" id="DB00627">
    <property type="generic name" value="Niacin"/>
</dbReference>
<dbReference type="DrugBank" id="DB03940">
    <property type="generic name" value="Oxamic Acid"/>
</dbReference>
<dbReference type="DrugBank" id="DB03884">
    <property type="generic name" value="Phenylpyruvic acid"/>
</dbReference>
<dbReference type="DrugBank" id="DB00119">
    <property type="generic name" value="Pyruvic acid"/>
</dbReference>
<dbReference type="GuidetoPHARMACOLOGY" id="989"/>
<dbReference type="TCDB" id="2.A.1.13.6">
    <property type="family name" value="the major facilitator superfamily (mfs)"/>
</dbReference>
<dbReference type="GlyGen" id="O15427">
    <property type="glycosylation" value="2 sites, 1 O-linked glycan (1 site)"/>
</dbReference>
<dbReference type="iPTMnet" id="O15427"/>
<dbReference type="PhosphoSitePlus" id="O15427"/>
<dbReference type="SwissPalm" id="O15427"/>
<dbReference type="BioMuta" id="SLC16A3"/>
<dbReference type="jPOST" id="O15427"/>
<dbReference type="MassIVE" id="O15427"/>
<dbReference type="PaxDb" id="9606-ENSP00000463978"/>
<dbReference type="PeptideAtlas" id="O15427"/>
<dbReference type="ProteomicsDB" id="48655"/>
<dbReference type="Pumba" id="O15427"/>
<dbReference type="Antibodypedia" id="4302">
    <property type="antibodies" value="279 antibodies from 34 providers"/>
</dbReference>
<dbReference type="DNASU" id="9123"/>
<dbReference type="Ensembl" id="ENST00000392339.6">
    <property type="protein sequence ID" value="ENSP00000376150.1"/>
    <property type="gene ID" value="ENSG00000141526.18"/>
</dbReference>
<dbReference type="Ensembl" id="ENST00000392341.6">
    <property type="protein sequence ID" value="ENSP00000376152.1"/>
    <property type="gene ID" value="ENSG00000141526.18"/>
</dbReference>
<dbReference type="Ensembl" id="ENST00000580189.6">
    <property type="protein sequence ID" value="ENSP00000464112.2"/>
    <property type="gene ID" value="ENSG00000141526.18"/>
</dbReference>
<dbReference type="Ensembl" id="ENST00000581287.5">
    <property type="protein sequence ID" value="ENSP00000463978.1"/>
    <property type="gene ID" value="ENSG00000141526.18"/>
</dbReference>
<dbReference type="Ensembl" id="ENST00000582743.6">
    <property type="protein sequence ID" value="ENSP00000462405.1"/>
    <property type="gene ID" value="ENSG00000141526.18"/>
</dbReference>
<dbReference type="Ensembl" id="ENST00000584689.6">
    <property type="protein sequence ID" value="ENSP00000464625.2"/>
    <property type="gene ID" value="ENSG00000141526.18"/>
</dbReference>
<dbReference type="Ensembl" id="ENST00000617373.5">
    <property type="protein sequence ID" value="ENSP00000483212.1"/>
    <property type="gene ID" value="ENSG00000141526.18"/>
</dbReference>
<dbReference type="Ensembl" id="ENST00000619321.2">
    <property type="protein sequence ID" value="ENSP00000482013.1"/>
    <property type="gene ID" value="ENSG00000141526.18"/>
</dbReference>
<dbReference type="GeneID" id="9123"/>
<dbReference type="KEGG" id="hsa:9123"/>
<dbReference type="MANE-Select" id="ENST00000582743.6">
    <property type="protein sequence ID" value="ENSP00000462405.1"/>
    <property type="RefSeq nucleotide sequence ID" value="NM_004207.4"/>
    <property type="RefSeq protein sequence ID" value="NP_004198.1"/>
</dbReference>
<dbReference type="UCSC" id="uc002keb.4">
    <property type="organism name" value="human"/>
</dbReference>
<dbReference type="AGR" id="HGNC:10924"/>
<dbReference type="CTD" id="9123"/>
<dbReference type="DisGeNET" id="9123"/>
<dbReference type="GeneCards" id="SLC16A3"/>
<dbReference type="HGNC" id="HGNC:10924">
    <property type="gene designation" value="SLC16A3"/>
</dbReference>
<dbReference type="HPA" id="ENSG00000141526">
    <property type="expression patterns" value="Tissue enhanced (skeletal)"/>
</dbReference>
<dbReference type="MalaCards" id="SLC16A3"/>
<dbReference type="MIM" id="603877">
    <property type="type" value="gene"/>
</dbReference>
<dbReference type="neXtProt" id="NX_O15427"/>
<dbReference type="OpenTargets" id="ENSG00000141526"/>
<dbReference type="PharmGKB" id="PA35815"/>
<dbReference type="VEuPathDB" id="HostDB:ENSG00000141526"/>
<dbReference type="eggNOG" id="KOG2504">
    <property type="taxonomic scope" value="Eukaryota"/>
</dbReference>
<dbReference type="GeneTree" id="ENSGT00940000158181"/>
<dbReference type="HOGENOM" id="CLU_001265_59_1_1"/>
<dbReference type="InParanoid" id="O15427"/>
<dbReference type="OMA" id="NWAVTRI"/>
<dbReference type="OrthoDB" id="6499973at2759"/>
<dbReference type="PAN-GO" id="O15427">
    <property type="GO annotations" value="3 GO annotations based on evolutionary models"/>
</dbReference>
<dbReference type="PhylomeDB" id="O15427"/>
<dbReference type="TreeFam" id="TF313792"/>
<dbReference type="PathwayCommons" id="O15427"/>
<dbReference type="Reactome" id="R-HSA-210991">
    <property type="pathway name" value="Basigin interactions"/>
</dbReference>
<dbReference type="Reactome" id="R-HSA-433692">
    <property type="pathway name" value="Proton-coupled monocarboxylate transport"/>
</dbReference>
<dbReference type="SignaLink" id="O15427"/>
<dbReference type="SIGNOR" id="O15427"/>
<dbReference type="BioGRID-ORCS" id="9123">
    <property type="hits" value="36 hits in 1165 CRISPR screens"/>
</dbReference>
<dbReference type="ChiTaRS" id="SLC16A3">
    <property type="organism name" value="human"/>
</dbReference>
<dbReference type="GeneWiki" id="SLC16A3"/>
<dbReference type="GenomeRNAi" id="9123"/>
<dbReference type="Pharos" id="O15427">
    <property type="development level" value="Tchem"/>
</dbReference>
<dbReference type="PRO" id="PR:O15427"/>
<dbReference type="Proteomes" id="UP000005640">
    <property type="component" value="Chromosome 17"/>
</dbReference>
<dbReference type="RNAct" id="O15427">
    <property type="molecule type" value="protein"/>
</dbReference>
<dbReference type="Bgee" id="ENSG00000141526">
    <property type="expression patterns" value="Expressed in stromal cell of endometrium and 194 other cell types or tissues"/>
</dbReference>
<dbReference type="ExpressionAtlas" id="O15427">
    <property type="expression patterns" value="baseline and differential"/>
</dbReference>
<dbReference type="GO" id="GO:0016324">
    <property type="term" value="C:apical plasma membrane"/>
    <property type="evidence" value="ECO:0000314"/>
    <property type="project" value="ARUK-UCL"/>
</dbReference>
<dbReference type="GO" id="GO:0016323">
    <property type="term" value="C:basolateral plasma membrane"/>
    <property type="evidence" value="ECO:0000314"/>
    <property type="project" value="UniProtKB"/>
</dbReference>
<dbReference type="GO" id="GO:0016328">
    <property type="term" value="C:lateral plasma membrane"/>
    <property type="evidence" value="ECO:0000314"/>
    <property type="project" value="ARUK-UCL"/>
</dbReference>
<dbReference type="GO" id="GO:0016020">
    <property type="term" value="C:membrane"/>
    <property type="evidence" value="ECO:0000304"/>
    <property type="project" value="ProtInc"/>
</dbReference>
<dbReference type="GO" id="GO:0031965">
    <property type="term" value="C:nuclear membrane"/>
    <property type="evidence" value="ECO:0000314"/>
    <property type="project" value="HPA"/>
</dbReference>
<dbReference type="GO" id="GO:0005886">
    <property type="term" value="C:plasma membrane"/>
    <property type="evidence" value="ECO:0000314"/>
    <property type="project" value="UniProtKB"/>
</dbReference>
<dbReference type="GO" id="GO:0015650">
    <property type="term" value="F:lactate:proton symporter activity"/>
    <property type="evidence" value="ECO:0000314"/>
    <property type="project" value="UniProtKB"/>
</dbReference>
<dbReference type="GO" id="GO:0008028">
    <property type="term" value="F:monocarboxylic acid transmembrane transporter activity"/>
    <property type="evidence" value="ECO:0000304"/>
    <property type="project" value="ProtInc"/>
</dbReference>
<dbReference type="GO" id="GO:0050833">
    <property type="term" value="F:pyruvate transmembrane transporter activity"/>
    <property type="evidence" value="ECO:0000314"/>
    <property type="project" value="UniProtKB"/>
</dbReference>
<dbReference type="GO" id="GO:0003723">
    <property type="term" value="F:RNA binding"/>
    <property type="evidence" value="ECO:0007005"/>
    <property type="project" value="UniProtKB"/>
</dbReference>
<dbReference type="GO" id="GO:0035873">
    <property type="term" value="P:lactate transmembrane transport"/>
    <property type="evidence" value="ECO:0000314"/>
    <property type="project" value="UniProtKB"/>
</dbReference>
<dbReference type="GO" id="GO:0015718">
    <property type="term" value="P:monocarboxylic acid transport"/>
    <property type="evidence" value="ECO:0000304"/>
    <property type="project" value="ProtInc"/>
</dbReference>
<dbReference type="GO" id="GO:0035879">
    <property type="term" value="P:plasma membrane lactate transport"/>
    <property type="evidence" value="ECO:0007669"/>
    <property type="project" value="Ensembl"/>
</dbReference>
<dbReference type="GO" id="GO:0042867">
    <property type="term" value="P:pyruvate catabolic process"/>
    <property type="evidence" value="ECO:0007669"/>
    <property type="project" value="Ensembl"/>
</dbReference>
<dbReference type="GO" id="GO:1901475">
    <property type="term" value="P:pyruvate transmembrane transport"/>
    <property type="evidence" value="ECO:0000314"/>
    <property type="project" value="UniProtKB"/>
</dbReference>
<dbReference type="CDD" id="cd17430">
    <property type="entry name" value="MFS_MCT3_4"/>
    <property type="match status" value="1"/>
</dbReference>
<dbReference type="FunFam" id="1.20.1250.20:FF:000077">
    <property type="entry name" value="Proton-coupled monocarboxylate transporter 3"/>
    <property type="match status" value="1"/>
</dbReference>
<dbReference type="Gene3D" id="1.20.1250.20">
    <property type="entry name" value="MFS general substrate transporter like domains"/>
    <property type="match status" value="1"/>
</dbReference>
<dbReference type="InterPro" id="IPR004743">
    <property type="entry name" value="MCT"/>
</dbReference>
<dbReference type="InterPro" id="IPR011701">
    <property type="entry name" value="MFS"/>
</dbReference>
<dbReference type="InterPro" id="IPR020846">
    <property type="entry name" value="MFS_dom"/>
</dbReference>
<dbReference type="InterPro" id="IPR036259">
    <property type="entry name" value="MFS_trans_sf"/>
</dbReference>
<dbReference type="InterPro" id="IPR050327">
    <property type="entry name" value="Proton-linked_MCT"/>
</dbReference>
<dbReference type="NCBIfam" id="TIGR00892">
    <property type="entry name" value="2A0113"/>
    <property type="match status" value="1"/>
</dbReference>
<dbReference type="PANTHER" id="PTHR11360">
    <property type="entry name" value="MONOCARBOXYLATE TRANSPORTER"/>
    <property type="match status" value="1"/>
</dbReference>
<dbReference type="PANTHER" id="PTHR11360:SF27">
    <property type="entry name" value="MONOCARBOXYLATE TRANSPORTER 4"/>
    <property type="match status" value="1"/>
</dbReference>
<dbReference type="Pfam" id="PF07690">
    <property type="entry name" value="MFS_1"/>
    <property type="match status" value="1"/>
</dbReference>
<dbReference type="SUPFAM" id="SSF103473">
    <property type="entry name" value="MFS general substrate transporter"/>
    <property type="match status" value="1"/>
</dbReference>
<dbReference type="PROSITE" id="PS50850">
    <property type="entry name" value="MFS"/>
    <property type="match status" value="1"/>
</dbReference>
<organism>
    <name type="scientific">Homo sapiens</name>
    <name type="common">Human</name>
    <dbReference type="NCBI Taxonomy" id="9606"/>
    <lineage>
        <taxon>Eukaryota</taxon>
        <taxon>Metazoa</taxon>
        <taxon>Chordata</taxon>
        <taxon>Craniata</taxon>
        <taxon>Vertebrata</taxon>
        <taxon>Euteleostomi</taxon>
        <taxon>Mammalia</taxon>
        <taxon>Eutheria</taxon>
        <taxon>Euarchontoglires</taxon>
        <taxon>Primates</taxon>
        <taxon>Haplorrhini</taxon>
        <taxon>Catarrhini</taxon>
        <taxon>Hominidae</taxon>
        <taxon>Homo</taxon>
    </lineage>
</organism>
<gene>
    <name type="primary">SLC16A3</name>
    <name evidence="13" type="synonym">MCT3</name>
    <name type="synonym">MCT4</name>
</gene>
<accession>O15427</accession>
<accession>B3KXG8</accession>
<accession>Q2M1P8</accession>
<evidence type="ECO:0000250" key="1">
    <source>
        <dbReference type="UniProtKB" id="O35910"/>
    </source>
</evidence>
<evidence type="ECO:0000255" key="2"/>
<evidence type="ECO:0000256" key="3">
    <source>
        <dbReference type="SAM" id="MobiDB-lite"/>
    </source>
</evidence>
<evidence type="ECO:0000269" key="4">
    <source>
    </source>
</evidence>
<evidence type="ECO:0000269" key="5">
    <source>
    </source>
</evidence>
<evidence type="ECO:0000269" key="6">
    <source>
    </source>
</evidence>
<evidence type="ECO:0000269" key="7">
    <source>
    </source>
</evidence>
<evidence type="ECO:0000269" key="8">
    <source>
    </source>
</evidence>
<evidence type="ECO:0000269" key="9">
    <source>
    </source>
</evidence>
<evidence type="ECO:0000269" key="10">
    <source>
    </source>
</evidence>
<evidence type="ECO:0000269" key="11">
    <source>
    </source>
</evidence>
<evidence type="ECO:0000269" key="12">
    <source ref="4"/>
</evidence>
<evidence type="ECO:0000303" key="13">
    <source>
    </source>
</evidence>
<evidence type="ECO:0000305" key="14"/>
<evidence type="ECO:0000305" key="15">
    <source>
    </source>
</evidence>
<evidence type="ECO:0007744" key="16">
    <source>
    </source>
</evidence>
<evidence type="ECO:0007744" key="17">
    <source>
    </source>
</evidence>
<evidence type="ECO:0007744" key="18">
    <source>
    </source>
</evidence>
<evidence type="ECO:0007744" key="19">
    <source>
    </source>
</evidence>
<evidence type="ECO:0007744" key="20">
    <source>
    </source>
</evidence>
<evidence type="ECO:0007744" key="21">
    <source>
    </source>
</evidence>
<comment type="function">
    <text evidence="1 5 9 10">Proton-dependent transporter of monocarboxylates such as L-lactate and pyruvate (PubMed:11101640, PubMed:23935841, PubMed:31719150). Plays a predominant role in L-lactate efflux from highly glycolytic cells (By similarity).</text>
</comment>
<comment type="catalytic activity">
    <reaction evidence="5 9 10">
        <text>(S)-lactate(in) + H(+)(in) = (S)-lactate(out) + H(+)(out)</text>
        <dbReference type="Rhea" id="RHEA:29415"/>
        <dbReference type="ChEBI" id="CHEBI:15378"/>
        <dbReference type="ChEBI" id="CHEBI:16651"/>
    </reaction>
    <physiologicalReaction direction="left-to-right" evidence="10">
        <dbReference type="Rhea" id="RHEA:29416"/>
    </physiologicalReaction>
    <physiologicalReaction direction="right-to-left" evidence="10">
        <dbReference type="Rhea" id="RHEA:29417"/>
    </physiologicalReaction>
</comment>
<comment type="catalytic activity">
    <reaction evidence="10">
        <text>pyruvate(out) + H(+)(out) = pyruvate(in) + H(+)(in)</text>
        <dbReference type="Rhea" id="RHEA:64720"/>
        <dbReference type="ChEBI" id="CHEBI:15361"/>
        <dbReference type="ChEBI" id="CHEBI:15378"/>
    </reaction>
</comment>
<comment type="biophysicochemical properties">
    <kinetics>
        <KM evidence="9">3.4 mM for (S)-lactate (pH 5.5)</KM>
        <KM evidence="9">37.6 mM for (S)-lactate (pH 7.5)</KM>
        <KM evidence="5">28 mM for (S)-lactate</KM>
        <KM evidence="5">519 mM for D-lactate</KM>
        <KM evidence="5">153 mM for pyruvate</KM>
        <KM evidence="10">1.7 mM for (S)-lactate</KM>
        <KM evidence="10">4.2 mM for pyruvate</KM>
    </kinetics>
</comment>
<comment type="subunit">
    <text evidence="4">Interacts with BSG; interaction mediates SLC16A3 targeting to the plasma membrane.</text>
</comment>
<comment type="interaction">
    <interactant intactId="EBI-7600166">
        <id>O15427</id>
    </interactant>
    <interactant intactId="EBI-744695">
        <id>Q8N9N5</id>
        <label>BANP</label>
    </interactant>
    <organismsDiffer>false</organismsDiffer>
    <experiments>3</experiments>
</comment>
<comment type="interaction">
    <interactant intactId="EBI-7600166">
        <id>O15427</id>
    </interactant>
    <interactant intactId="EBI-357481">
        <id>Q12959</id>
        <label>DLG1</label>
    </interactant>
    <organismsDiffer>false</organismsDiffer>
    <experiments>2</experiments>
</comment>
<comment type="interaction">
    <interactant intactId="EBI-7600166">
        <id>O15427</id>
    </interactant>
    <interactant intactId="EBI-10175124">
        <id>Q8IZU0</id>
        <label>FAM9B</label>
    </interactant>
    <organismsDiffer>false</organismsDiffer>
    <experiments>3</experiments>
</comment>
<comment type="interaction">
    <interactant intactId="EBI-7600166">
        <id>O15427</id>
    </interactant>
    <interactant intactId="EBI-17458373">
        <id>P48165</id>
        <label>GJA8</label>
    </interactant>
    <organismsDiffer>false</organismsDiffer>
    <experiments>3</experiments>
</comment>
<comment type="interaction">
    <interactant intactId="EBI-7600166">
        <id>O15427</id>
    </interactant>
    <interactant intactId="EBI-12094670">
        <id>Q8WUI4-6</id>
        <label>HDAC7</label>
    </interactant>
    <organismsDiffer>false</organismsDiffer>
    <experiments>3</experiments>
</comment>
<comment type="interaction">
    <interactant intactId="EBI-7600166">
        <id>O15427</id>
    </interactant>
    <interactant intactId="EBI-12197079">
        <id>P84074</id>
        <label>HPCA</label>
    </interactant>
    <organismsDiffer>false</organismsDiffer>
    <experiments>5</experiments>
</comment>
<comment type="interaction">
    <interactant intactId="EBI-7600166">
        <id>O15427</id>
    </interactant>
    <interactant intactId="EBI-10260040">
        <id>Q86WQ0</id>
        <label>NR2C2AP</label>
    </interactant>
    <organismsDiffer>false</organismsDiffer>
    <experiments>3</experiments>
</comment>
<comment type="interaction">
    <interactant intactId="EBI-7600166">
        <id>O15427</id>
    </interactant>
    <interactant intactId="EBI-741480">
        <id>Q9UMX0</id>
        <label>UBQLN1</label>
    </interactant>
    <organismsDiffer>false</organismsDiffer>
    <experiments>3</experiments>
</comment>
<comment type="interaction">
    <interactant intactId="EBI-7600166">
        <id>O15427</id>
    </interactant>
    <interactant intactId="EBI-947187">
        <id>Q9UHD9</id>
        <label>UBQLN2</label>
    </interactant>
    <organismsDiffer>false</organismsDiffer>
    <experiments>3</experiments>
</comment>
<comment type="subcellular location">
    <subcellularLocation>
        <location evidence="4 5 6 9">Cell membrane</location>
        <topology>Multi-pass membrane protein</topology>
    </subcellularLocation>
    <subcellularLocation>
        <location evidence="8">Basolateral cell membrane</location>
        <topology evidence="2">Multi-pass membrane protein</topology>
    </subcellularLocation>
    <text evidence="4 8">Plasma membrane localization is dependent upon the BSG/MCT4 interaction (PubMed:10921872). Basolateral sorting signals (BLSS) in C-terminal cytoplasmic tail ensure its basolateral expression in polarised epithelial cells (PubMed:21199217).</text>
</comment>
<comment type="tissue specificity">
    <text evidence="11">Highly expressed in skeletal muscle.</text>
</comment>
<comment type="induction">
    <text evidence="7">Up-regulated by hypoxia through a HIF1A-mediated mechanism.</text>
</comment>
<comment type="domain">
    <text evidence="8">Two basolateral sorting signals (BSS) in its C-terminal cytoplasmic tail are required to direct SLC16A3 to the basolateral membrane.</text>
</comment>
<comment type="similarity">
    <text evidence="14">Belongs to the major facilitator superfamily. Monocarboxylate porter (TC 2.A.1.13) family.</text>
</comment>
<comment type="caution">
    <text evidence="5 10">Was initially thought to be considered to be a low affinity lactate transporter with negligible affinity for pyruvate (PubMed:11101640). However, it was later shown that SLC16A3 is a high affinity lactate transporter with physiologically relevant affinity for pyruvate (PubMed:31719150).</text>
</comment>
<comment type="caution">
    <text evidence="15">Was initially assigned as monocarboxylate transporter 3 (MCT3) (PubMed:9425115). However, it was later shown that it corresponds to monocarboxylate transporter 4 (MCT4).</text>
</comment>
<comment type="online information" name="Atlas of Genetics and Cytogenetics in Oncology and Haematology">
    <link uri="https://atlasgeneticsoncology.org/gene/44573/SLC16A3"/>
</comment>
<protein>
    <recommendedName>
        <fullName>Monocarboxylate transporter 4</fullName>
        <shortName>MCT 4</shortName>
    </recommendedName>
    <alternativeName>
        <fullName>Solute carrier family 16 member 3</fullName>
    </alternativeName>
</protein>
<proteinExistence type="evidence at protein level"/>
<name>MOT4_HUMAN</name>